<proteinExistence type="evidence at transcript level"/>
<dbReference type="EMBL" id="DQ086838">
    <property type="protein sequence ID" value="AAZ14062.1"/>
    <property type="molecule type" value="mRNA"/>
</dbReference>
<dbReference type="EMBL" id="AC008263">
    <property type="protein sequence ID" value="AAD55299.1"/>
    <property type="status" value="ALT_SEQ"/>
    <property type="molecule type" value="Genomic_DNA"/>
</dbReference>
<dbReference type="EMBL" id="AC008263">
    <property type="protein sequence ID" value="AAD55300.1"/>
    <property type="molecule type" value="Genomic_DNA"/>
</dbReference>
<dbReference type="EMBL" id="CP002684">
    <property type="protein sequence ID" value="AEE35630.1"/>
    <property type="molecule type" value="Genomic_DNA"/>
</dbReference>
<dbReference type="EMBL" id="BT011670">
    <property type="protein sequence ID" value="AAS47676.1"/>
    <property type="molecule type" value="mRNA"/>
</dbReference>
<dbReference type="EMBL" id="AK226665">
    <property type="protein sequence ID" value="BAE98773.1"/>
    <property type="molecule type" value="mRNA"/>
</dbReference>
<dbReference type="PIR" id="A96777">
    <property type="entry name" value="A96777"/>
</dbReference>
<dbReference type="PIR" id="H96776">
    <property type="entry name" value="H96776"/>
</dbReference>
<dbReference type="RefSeq" id="NP_177615.2">
    <molecule id="F4HVS0-1"/>
    <property type="nucleotide sequence ID" value="NM_106135.3"/>
</dbReference>
<dbReference type="SMR" id="F4HVS0"/>
<dbReference type="FunCoup" id="F4HVS0">
    <property type="interactions" value="1"/>
</dbReference>
<dbReference type="IntAct" id="F4HVS0">
    <property type="interactions" value="1"/>
</dbReference>
<dbReference type="STRING" id="3702.F4HVS0"/>
<dbReference type="GlyGen" id="F4HVS0">
    <property type="glycosylation" value="1 site"/>
</dbReference>
<dbReference type="iPTMnet" id="F4HVS0"/>
<dbReference type="PaxDb" id="3702-AT1G74770.1"/>
<dbReference type="EnsemblPlants" id="AT1G74770.1">
    <molecule id="F4HVS0-1"/>
    <property type="protein sequence ID" value="AT1G74770.1"/>
    <property type="gene ID" value="AT1G74770"/>
</dbReference>
<dbReference type="GeneID" id="843816"/>
<dbReference type="Gramene" id="AT1G74770.1">
    <molecule id="F4HVS0-1"/>
    <property type="protein sequence ID" value="AT1G74770.1"/>
    <property type="gene ID" value="AT1G74770"/>
</dbReference>
<dbReference type="KEGG" id="ath:AT1G74770"/>
<dbReference type="Araport" id="AT1G74770"/>
<dbReference type="TAIR" id="AT1G74770">
    <property type="gene designation" value="BTSL1"/>
</dbReference>
<dbReference type="eggNOG" id="KOG1940">
    <property type="taxonomic scope" value="Eukaryota"/>
</dbReference>
<dbReference type="HOGENOM" id="CLU_003967_0_0_1"/>
<dbReference type="InParanoid" id="F4HVS0"/>
<dbReference type="OMA" id="ICHEDIF"/>
<dbReference type="UniPathway" id="UPA00143"/>
<dbReference type="PRO" id="PR:F4HVS0"/>
<dbReference type="Proteomes" id="UP000006548">
    <property type="component" value="Chromosome 1"/>
</dbReference>
<dbReference type="ExpressionAtlas" id="F4HVS0">
    <property type="expression patterns" value="baseline and differential"/>
</dbReference>
<dbReference type="GO" id="GO:0016020">
    <property type="term" value="C:membrane"/>
    <property type="evidence" value="ECO:0007669"/>
    <property type="project" value="UniProtKB-SubCell"/>
</dbReference>
<dbReference type="GO" id="GO:0005634">
    <property type="term" value="C:nucleus"/>
    <property type="evidence" value="ECO:0007669"/>
    <property type="project" value="UniProtKB-SubCell"/>
</dbReference>
<dbReference type="GO" id="GO:0016874">
    <property type="term" value="F:ligase activity"/>
    <property type="evidence" value="ECO:0007669"/>
    <property type="project" value="UniProtKB-KW"/>
</dbReference>
<dbReference type="GO" id="GO:0061630">
    <property type="term" value="F:ubiquitin protein ligase activity"/>
    <property type="evidence" value="ECO:0000314"/>
    <property type="project" value="TAIR"/>
</dbReference>
<dbReference type="GO" id="GO:0008270">
    <property type="term" value="F:zinc ion binding"/>
    <property type="evidence" value="ECO:0007669"/>
    <property type="project" value="UniProtKB-KW"/>
</dbReference>
<dbReference type="GO" id="GO:0006879">
    <property type="term" value="P:intracellular iron ion homeostasis"/>
    <property type="evidence" value="ECO:0000316"/>
    <property type="project" value="TAIR"/>
</dbReference>
<dbReference type="GO" id="GO:0033212">
    <property type="term" value="P:iron import into cell"/>
    <property type="evidence" value="ECO:0000315"/>
    <property type="project" value="TAIR"/>
</dbReference>
<dbReference type="GO" id="GO:0098711">
    <property type="term" value="P:iron ion import across plasma membrane"/>
    <property type="evidence" value="ECO:0000315"/>
    <property type="project" value="TAIR"/>
</dbReference>
<dbReference type="GO" id="GO:0043161">
    <property type="term" value="P:proteasome-mediated ubiquitin-dependent protein catabolic process"/>
    <property type="evidence" value="ECO:0000314"/>
    <property type="project" value="TAIR"/>
</dbReference>
<dbReference type="GO" id="GO:0016567">
    <property type="term" value="P:protein ubiquitination"/>
    <property type="evidence" value="ECO:0007669"/>
    <property type="project" value="UniProtKB-UniPathway"/>
</dbReference>
<dbReference type="GO" id="GO:0034756">
    <property type="term" value="P:regulation of iron ion transport"/>
    <property type="evidence" value="ECO:0000315"/>
    <property type="project" value="TAIR"/>
</dbReference>
<dbReference type="CDD" id="cd12108">
    <property type="entry name" value="Hr-like"/>
    <property type="match status" value="2"/>
</dbReference>
<dbReference type="CDD" id="cd16464">
    <property type="entry name" value="RING-H2_Pirh2-like"/>
    <property type="match status" value="1"/>
</dbReference>
<dbReference type="FunFam" id="1.20.120.520:FF:000009">
    <property type="entry name" value="Zinc finger protein BRUTUS"/>
    <property type="match status" value="1"/>
</dbReference>
<dbReference type="FunFam" id="3.30.40.10:FF:000208">
    <property type="entry name" value="Zinc finger protein-related isoform 1"/>
    <property type="match status" value="1"/>
</dbReference>
<dbReference type="Gene3D" id="2.20.28.10">
    <property type="match status" value="1"/>
</dbReference>
<dbReference type="Gene3D" id="1.20.120.520">
    <property type="entry name" value="nmb1532 protein domain like"/>
    <property type="match status" value="3"/>
</dbReference>
<dbReference type="Gene3D" id="3.30.40.10">
    <property type="entry name" value="Zinc/RING finger domain, C3HC4 (zinc finger)"/>
    <property type="match status" value="1"/>
</dbReference>
<dbReference type="InterPro" id="IPR012312">
    <property type="entry name" value="Hemerythrin-like"/>
</dbReference>
<dbReference type="InterPro" id="IPR039512">
    <property type="entry name" value="RCHY1_zinc-ribbon"/>
</dbReference>
<dbReference type="InterPro" id="IPR008913">
    <property type="entry name" value="Znf_CHY"/>
</dbReference>
<dbReference type="InterPro" id="IPR037274">
    <property type="entry name" value="Znf_CHY_sf"/>
</dbReference>
<dbReference type="InterPro" id="IPR017921">
    <property type="entry name" value="Znf_CTCHY"/>
</dbReference>
<dbReference type="InterPro" id="IPR037275">
    <property type="entry name" value="Znf_CTCHY_sf"/>
</dbReference>
<dbReference type="InterPro" id="IPR001841">
    <property type="entry name" value="Znf_RING"/>
</dbReference>
<dbReference type="InterPro" id="IPR013083">
    <property type="entry name" value="Znf_RING/FYVE/PHD"/>
</dbReference>
<dbReference type="PANTHER" id="PTHR21319">
    <property type="entry name" value="RING FINGER AND CHY ZINC FINGER DOMAIN-CONTAINING PROTEIN 1"/>
    <property type="match status" value="1"/>
</dbReference>
<dbReference type="PANTHER" id="PTHR21319:SF39">
    <property type="entry name" value="ZINC FINGER PROTEIN"/>
    <property type="match status" value="1"/>
</dbReference>
<dbReference type="Pfam" id="PF01814">
    <property type="entry name" value="Hemerythrin"/>
    <property type="match status" value="1"/>
</dbReference>
<dbReference type="Pfam" id="PF05495">
    <property type="entry name" value="zf-CHY"/>
    <property type="match status" value="1"/>
</dbReference>
<dbReference type="Pfam" id="PF13639">
    <property type="entry name" value="zf-RING_2"/>
    <property type="match status" value="1"/>
</dbReference>
<dbReference type="Pfam" id="PF14599">
    <property type="entry name" value="zinc_ribbon_6"/>
    <property type="match status" value="1"/>
</dbReference>
<dbReference type="SMART" id="SM00184">
    <property type="entry name" value="RING"/>
    <property type="match status" value="2"/>
</dbReference>
<dbReference type="SUPFAM" id="SSF161219">
    <property type="entry name" value="CHY zinc finger-like"/>
    <property type="match status" value="1"/>
</dbReference>
<dbReference type="SUPFAM" id="SSF57850">
    <property type="entry name" value="RING/U-box"/>
    <property type="match status" value="1"/>
</dbReference>
<dbReference type="SUPFAM" id="SSF161245">
    <property type="entry name" value="Zinc hairpin stack"/>
    <property type="match status" value="1"/>
</dbReference>
<dbReference type="PROSITE" id="PS51266">
    <property type="entry name" value="ZF_CHY"/>
    <property type="match status" value="1"/>
</dbReference>
<dbReference type="PROSITE" id="PS51270">
    <property type="entry name" value="ZF_CTCHY"/>
    <property type="match status" value="1"/>
</dbReference>
<dbReference type="PROSITE" id="PS50089">
    <property type="entry name" value="ZF_RING_2"/>
    <property type="match status" value="1"/>
</dbReference>
<name>BTSL2_ARATH</name>
<accession>F4HVS0</accession>
<accession>Q0WVS5</accession>
<accession>Q9SSG0</accession>
<accession>Q9SSG1</accession>
<comment type="function">
    <text evidence="1">Probable E3 ubiquitin-protein ligase that may regulate the response to iron deficiency and thus contributes to iron homeostasis.</text>
</comment>
<comment type="pathway">
    <text evidence="7">Protein modification; protein ubiquitination.</text>
</comment>
<comment type="subunit">
    <text evidence="1">Binds zinc and iron ions.</text>
</comment>
<comment type="subcellular location">
    <subcellularLocation>
        <location evidence="2">Membrane</location>
        <topology evidence="2">Single-pass membrane protein</topology>
    </subcellularLocation>
    <subcellularLocation>
        <location evidence="1">Nucleus</location>
    </subcellularLocation>
</comment>
<comment type="alternative products">
    <event type="alternative splicing"/>
    <isoform>
        <id>F4HVS0-1</id>
        <name>1</name>
        <sequence type="displayed"/>
    </isoform>
    <isoform>
        <id>F4HVS0-2</id>
        <name>2</name>
        <sequence type="described" ref="VSP_058561"/>
    </isoform>
</comment>
<comment type="sequence caution" evidence="7">
    <conflict type="erroneous gene model prediction">
        <sequence resource="EMBL-CDS" id="AAD55299"/>
    </conflict>
</comment>
<organism>
    <name type="scientific">Arabidopsis thaliana</name>
    <name type="common">Mouse-ear cress</name>
    <dbReference type="NCBI Taxonomy" id="3702"/>
    <lineage>
        <taxon>Eukaryota</taxon>
        <taxon>Viridiplantae</taxon>
        <taxon>Streptophyta</taxon>
        <taxon>Embryophyta</taxon>
        <taxon>Tracheophyta</taxon>
        <taxon>Spermatophyta</taxon>
        <taxon>Magnoliopsida</taxon>
        <taxon>eudicotyledons</taxon>
        <taxon>Gunneridae</taxon>
        <taxon>Pentapetalae</taxon>
        <taxon>rosids</taxon>
        <taxon>malvids</taxon>
        <taxon>Brassicales</taxon>
        <taxon>Brassicaceae</taxon>
        <taxon>Camelineae</taxon>
        <taxon>Arabidopsis</taxon>
    </lineage>
</organism>
<feature type="chain" id="PRO_0000437682" description="Zinc finger protein BRUTUS-like At1g74770">
    <location>
        <begin position="1"/>
        <end position="1259"/>
    </location>
</feature>
<feature type="transmembrane region" description="Helical" evidence="2">
    <location>
        <begin position="441"/>
        <end position="461"/>
    </location>
</feature>
<feature type="zinc finger region" description="CHY-type" evidence="4">
    <location>
        <begin position="1018"/>
        <end position="1087"/>
    </location>
</feature>
<feature type="zinc finger region" description="CTCHY-type" evidence="5">
    <location>
        <begin position="1089"/>
        <end position="1152"/>
    </location>
</feature>
<feature type="zinc finger region" description="RING-type; atypical" evidence="3">
    <location>
        <begin position="1153"/>
        <end position="1195"/>
    </location>
</feature>
<feature type="region of interest" description="Disordered" evidence="6">
    <location>
        <begin position="904"/>
        <end position="938"/>
    </location>
</feature>
<feature type="compositionally biased region" description="Basic and acidic residues" evidence="6">
    <location>
        <begin position="904"/>
        <end position="916"/>
    </location>
</feature>
<feature type="compositionally biased region" description="Basic and acidic residues" evidence="6">
    <location>
        <begin position="924"/>
        <end position="934"/>
    </location>
</feature>
<feature type="binding site" evidence="4">
    <location>
        <position position="1025"/>
    </location>
    <ligand>
        <name>Zn(2+)</name>
        <dbReference type="ChEBI" id="CHEBI:29105"/>
        <label>1</label>
    </ligand>
</feature>
<feature type="binding site" evidence="4">
    <location>
        <position position="1027"/>
    </location>
    <ligand>
        <name>Zn(2+)</name>
        <dbReference type="ChEBI" id="CHEBI:29105"/>
        <label>1</label>
    </ligand>
</feature>
<feature type="binding site" evidence="4">
    <location>
        <position position="1038"/>
    </location>
    <ligand>
        <name>Zn(2+)</name>
        <dbReference type="ChEBI" id="CHEBI:29105"/>
        <label>2</label>
    </ligand>
</feature>
<feature type="binding site" evidence="4">
    <location>
        <position position="1039"/>
    </location>
    <ligand>
        <name>Zn(2+)</name>
        <dbReference type="ChEBI" id="CHEBI:29105"/>
        <label>2</label>
    </ligand>
</feature>
<feature type="binding site" evidence="4">
    <location>
        <position position="1045"/>
    </location>
    <ligand>
        <name>Zn(2+)</name>
        <dbReference type="ChEBI" id="CHEBI:29105"/>
        <label>1</label>
    </ligand>
</feature>
<feature type="binding site" evidence="4">
    <location>
        <position position="1048"/>
    </location>
    <ligand>
        <name>Zn(2+)</name>
        <dbReference type="ChEBI" id="CHEBI:29105"/>
        <label>1</label>
    </ligand>
</feature>
<feature type="binding site" evidence="4">
    <location>
        <position position="1049"/>
    </location>
    <ligand>
        <name>Zn(2+)</name>
        <dbReference type="ChEBI" id="CHEBI:29105"/>
        <label>2</label>
    </ligand>
</feature>
<feature type="binding site" evidence="4">
    <location>
        <position position="1055"/>
    </location>
    <ligand>
        <name>Zn(2+)</name>
        <dbReference type="ChEBI" id="CHEBI:29105"/>
        <label>2</label>
    </ligand>
</feature>
<feature type="binding site" evidence="4">
    <location>
        <position position="1067"/>
    </location>
    <ligand>
        <name>Zn(2+)</name>
        <dbReference type="ChEBI" id="CHEBI:29105"/>
        <label>3</label>
    </ligand>
</feature>
<feature type="binding site" evidence="4">
    <location>
        <position position="1070"/>
    </location>
    <ligand>
        <name>Zn(2+)</name>
        <dbReference type="ChEBI" id="CHEBI:29105"/>
        <label>3</label>
    </ligand>
</feature>
<feature type="binding site" evidence="4">
    <location>
        <position position="1080"/>
    </location>
    <ligand>
        <name>Zn(2+)</name>
        <dbReference type="ChEBI" id="CHEBI:29105"/>
        <label>3</label>
    </ligand>
</feature>
<feature type="binding site" evidence="4">
    <location>
        <position position="1085"/>
    </location>
    <ligand>
        <name>Zn(2+)</name>
        <dbReference type="ChEBI" id="CHEBI:29105"/>
        <label>3</label>
    </ligand>
</feature>
<feature type="binding site" evidence="5">
    <location>
        <position position="1094"/>
    </location>
    <ligand>
        <name>Zn(2+)</name>
        <dbReference type="ChEBI" id="CHEBI:29105"/>
        <label>4</label>
    </ligand>
</feature>
<feature type="binding site" evidence="5">
    <location>
        <position position="1097"/>
    </location>
    <ligand>
        <name>Zn(2+)</name>
        <dbReference type="ChEBI" id="CHEBI:29105"/>
        <label>4</label>
    </ligand>
</feature>
<feature type="binding site" evidence="5">
    <location>
        <position position="1108"/>
    </location>
    <ligand>
        <name>Zn(2+)</name>
        <dbReference type="ChEBI" id="CHEBI:29105"/>
        <label>4</label>
    </ligand>
</feature>
<feature type="binding site" evidence="5">
    <location>
        <position position="1109"/>
    </location>
    <ligand>
        <name>Zn(2+)</name>
        <dbReference type="ChEBI" id="CHEBI:29105"/>
        <label>5</label>
    </ligand>
</feature>
<feature type="binding site" evidence="5">
    <location>
        <position position="1112"/>
    </location>
    <ligand>
        <name>Zn(2+)</name>
        <dbReference type="ChEBI" id="CHEBI:29105"/>
        <label>5</label>
    </ligand>
</feature>
<feature type="binding site" evidence="5">
    <location>
        <position position="1115"/>
    </location>
    <ligand>
        <name>Zn(2+)</name>
        <dbReference type="ChEBI" id="CHEBI:29105"/>
        <label>4</label>
    </ligand>
</feature>
<feature type="binding site" evidence="5">
    <location>
        <position position="1127"/>
    </location>
    <ligand>
        <name>Zn(2+)</name>
        <dbReference type="ChEBI" id="CHEBI:29105"/>
        <label>5</label>
    </ligand>
</feature>
<feature type="binding site" evidence="5">
    <location>
        <position position="1128"/>
    </location>
    <ligand>
        <name>Zn(2+)</name>
        <dbReference type="ChEBI" id="CHEBI:29105"/>
        <label>6</label>
    </ligand>
</feature>
<feature type="binding site" evidence="5">
    <location>
        <position position="1131"/>
    </location>
    <ligand>
        <name>Zn(2+)</name>
        <dbReference type="ChEBI" id="CHEBI:29105"/>
        <label>6</label>
    </ligand>
</feature>
<feature type="binding site" evidence="5">
    <location>
        <position position="1134"/>
    </location>
    <ligand>
        <name>Zn(2+)</name>
        <dbReference type="ChEBI" id="CHEBI:29105"/>
        <label>5</label>
    </ligand>
</feature>
<feature type="binding site" evidence="5">
    <location>
        <position position="1142"/>
    </location>
    <ligand>
        <name>Zn(2+)</name>
        <dbReference type="ChEBI" id="CHEBI:29105"/>
        <label>6</label>
    </ligand>
</feature>
<feature type="binding site" evidence="5">
    <location>
        <position position="1144"/>
    </location>
    <ligand>
        <name>Zn(2+)</name>
        <dbReference type="ChEBI" id="CHEBI:29105"/>
        <label>6</label>
    </ligand>
</feature>
<feature type="site" description="Required for iron-dependent instability" evidence="1">
    <location>
        <position position="90"/>
    </location>
</feature>
<feature type="splice variant" id="VSP_058561" description="In isoform 2.">
    <location>
        <begin position="1"/>
        <end position="1004"/>
    </location>
</feature>
<gene>
    <name evidence="8" type="ordered locus">At1g74770</name>
    <name evidence="9" type="ORF">F25A4.26</name>
    <name evidence="10" type="ORF">F25A4.27</name>
</gene>
<evidence type="ECO:0000250" key="1">
    <source>
        <dbReference type="UniProtKB" id="Q8LPQ5"/>
    </source>
</evidence>
<evidence type="ECO:0000255" key="2"/>
<evidence type="ECO:0000255" key="3">
    <source>
        <dbReference type="PROSITE-ProRule" id="PRU00175"/>
    </source>
</evidence>
<evidence type="ECO:0000255" key="4">
    <source>
        <dbReference type="PROSITE-ProRule" id="PRU00601"/>
    </source>
</evidence>
<evidence type="ECO:0000255" key="5">
    <source>
        <dbReference type="PROSITE-ProRule" id="PRU00965"/>
    </source>
</evidence>
<evidence type="ECO:0000256" key="6">
    <source>
        <dbReference type="SAM" id="MobiDB-lite"/>
    </source>
</evidence>
<evidence type="ECO:0000305" key="7"/>
<evidence type="ECO:0000312" key="8">
    <source>
        <dbReference type="Araport" id="AT1G74770"/>
    </source>
</evidence>
<evidence type="ECO:0000312" key="9">
    <source>
        <dbReference type="EMBL" id="AAD55299.1"/>
    </source>
</evidence>
<evidence type="ECO:0000312" key="10">
    <source>
        <dbReference type="EMBL" id="AAD55300.1"/>
    </source>
</evidence>
<keyword id="KW-0025">Alternative splicing</keyword>
<keyword id="KW-0408">Iron</keyword>
<keyword id="KW-0436">Ligase</keyword>
<keyword id="KW-0472">Membrane</keyword>
<keyword id="KW-0479">Metal-binding</keyword>
<keyword id="KW-0539">Nucleus</keyword>
<keyword id="KW-1185">Reference proteome</keyword>
<keyword id="KW-0812">Transmembrane</keyword>
<keyword id="KW-1133">Transmembrane helix</keyword>
<keyword id="KW-0833">Ubl conjugation pathway</keyword>
<keyword id="KW-0862">Zinc</keyword>
<keyword id="KW-0863">Zinc-finger</keyword>
<sequence>MGGGNLHSLPPENASVSASYAVTVGNTKLSDAPVLFFVYCHKAFRAQLVELRRFATDAAEADSFSGDLAVELSRKFEFLKLVYKYHSAAEDEVIFLALDKRVKNIVSNYSLEHAGTDDLFTSIFHWLHVLEEEIGSRSDVLREVILCIGTIQSSICQHMLKEERQVFPLLIEKFSFREQASLVWQFICSVPVMVLEDFLPWMISHLSHEEKIEVENCIKDVAPNEDSLQQVISSWLLDDSQSSCGTPTEIMKGVQYVNVSKSLKKSPESHPSSGCFQRFWEWSKKSLSIPNVGRSPIHGLRLFQNAIEKDLRDIQEGLCQAKFQTLILDLDVLMARLNFLADVLVSYSNAFKKFFHPVLEEMTARRSSTAKQFNIDDCLENFQRLLYKSADDKTKTDNFLLQLQEELESLIIQVTKQFAIQRTEVFPIISKNCNHEMQKQLLYTSIHVLPLGLLKCVILWFSAHLSEEESQSILHFLSLEDSSPKKSFPRLLLQWLRFGYSGKTSVERFWKQLDVMFKVRCSCQKEHTEEASGSFSNQTQLQLCKVSKDVYPRKKDKSSTCFMSMDLAVGDMYETPYSSRMNQQMTFSGKLKPPLHLPDFFGEKNMDDPMIMDVKPIDLLFFFHKAMKMDLDYLVCGSTRLAADFRFLAEFQQRFHMIKFLYQIHSDAEDEIAFPALEAKGQLKNISHSFSIDHELETKHFDKVSFILNEMSELNMLVSTINTTAADHDRKMKYERLCLSLREICKSMHKLLSEHIQHEETELWGLFRNCFSIEEQEKIIGCMLGRISGEILQDMIPWLMESLTSDEQLAAMSLWRQATRKTMFVEWLTEWYNGHVLQEEAGEANNDPFGDSDPLEIVWKYLFEASADGEKGSMRSSLLKLPKTNFTGIMNQPPPNYKVEVGKKEEKDLERSESKKICRGSNQEGDKEQTDKMSQKVSQFGPSKKYEQLLTMSEEELVVVIKKISCDSSLDPQKKDYIKQNLLMSRWNISQRTYNLEPSSLSSNMETVHGQHPSYRDPHSLIFGCNHYKRNCKLLAPCCDKLFTCIRCHDEEADHSVDRKQITKMMCMKCLLIQPIGANCSNTSCKSSMGKYFCKICKLYDDERKIYHCPYCNLCRVGKGLGIDYFHCMKCNACMSRTLVEHVCREKCLEDNCPICHEYIFTSSSPVKALPCGHLMHSTCFQEYTCSHYTCPVCSKSLGDMQVYFKMLDALLAEEKMPDEYSNKTQVILCNDCGRKGNAPYHWLYHKCTTCGSYNSRLL</sequence>
<protein>
    <recommendedName>
        <fullName evidence="7">Zinc finger protein BRUTUS-like At1g74770</fullName>
    </recommendedName>
</protein>
<reference key="1">
    <citation type="journal article" date="2005" name="Plant Physiol.">
        <title>Functional analysis of the RING-type ubiquitin ligase family of Arabidopsis.</title>
        <authorList>
            <person name="Stone S.L."/>
            <person name="Hauksdottir H."/>
            <person name="Troy A."/>
            <person name="Herschleb J."/>
            <person name="Kraft E."/>
            <person name="Callis J."/>
        </authorList>
    </citation>
    <scope>NUCLEOTIDE SEQUENCE [MRNA] (ISOFORM 1)</scope>
    <scope>GENE FAMILY</scope>
    <scope>NOMENCLATURE</scope>
    <source>
        <tissue>Flower</tissue>
        <tissue>Leaf</tissue>
        <tissue>Seedling</tissue>
    </source>
</reference>
<reference key="2">
    <citation type="journal article" date="2000" name="Nature">
        <title>Sequence and analysis of chromosome 1 of the plant Arabidopsis thaliana.</title>
        <authorList>
            <person name="Theologis A."/>
            <person name="Ecker J.R."/>
            <person name="Palm C.J."/>
            <person name="Federspiel N.A."/>
            <person name="Kaul S."/>
            <person name="White O."/>
            <person name="Alonso J."/>
            <person name="Altafi H."/>
            <person name="Araujo R."/>
            <person name="Bowman C.L."/>
            <person name="Brooks S.Y."/>
            <person name="Buehler E."/>
            <person name="Chan A."/>
            <person name="Chao Q."/>
            <person name="Chen H."/>
            <person name="Cheuk R.F."/>
            <person name="Chin C.W."/>
            <person name="Chung M.K."/>
            <person name="Conn L."/>
            <person name="Conway A.B."/>
            <person name="Conway A.R."/>
            <person name="Creasy T.H."/>
            <person name="Dewar K."/>
            <person name="Dunn P."/>
            <person name="Etgu P."/>
            <person name="Feldblyum T.V."/>
            <person name="Feng J.-D."/>
            <person name="Fong B."/>
            <person name="Fujii C.Y."/>
            <person name="Gill J.E."/>
            <person name="Goldsmith A.D."/>
            <person name="Haas B."/>
            <person name="Hansen N.F."/>
            <person name="Hughes B."/>
            <person name="Huizar L."/>
            <person name="Hunter J.L."/>
            <person name="Jenkins J."/>
            <person name="Johnson-Hopson C."/>
            <person name="Khan S."/>
            <person name="Khaykin E."/>
            <person name="Kim C.J."/>
            <person name="Koo H.L."/>
            <person name="Kremenetskaia I."/>
            <person name="Kurtz D.B."/>
            <person name="Kwan A."/>
            <person name="Lam B."/>
            <person name="Langin-Hooper S."/>
            <person name="Lee A."/>
            <person name="Lee J.M."/>
            <person name="Lenz C.A."/>
            <person name="Li J.H."/>
            <person name="Li Y.-P."/>
            <person name="Lin X."/>
            <person name="Liu S.X."/>
            <person name="Liu Z.A."/>
            <person name="Luros J.S."/>
            <person name="Maiti R."/>
            <person name="Marziali A."/>
            <person name="Militscher J."/>
            <person name="Miranda M."/>
            <person name="Nguyen M."/>
            <person name="Nierman W.C."/>
            <person name="Osborne B.I."/>
            <person name="Pai G."/>
            <person name="Peterson J."/>
            <person name="Pham P.K."/>
            <person name="Rizzo M."/>
            <person name="Rooney T."/>
            <person name="Rowley D."/>
            <person name="Sakano H."/>
            <person name="Salzberg S.L."/>
            <person name="Schwartz J.R."/>
            <person name="Shinn P."/>
            <person name="Southwick A.M."/>
            <person name="Sun H."/>
            <person name="Tallon L.J."/>
            <person name="Tambunga G."/>
            <person name="Toriumi M.J."/>
            <person name="Town C.D."/>
            <person name="Utterback T."/>
            <person name="Van Aken S."/>
            <person name="Vaysberg M."/>
            <person name="Vysotskaia V.S."/>
            <person name="Walker M."/>
            <person name="Wu D."/>
            <person name="Yu G."/>
            <person name="Fraser C.M."/>
            <person name="Venter J.C."/>
            <person name="Davis R.W."/>
        </authorList>
    </citation>
    <scope>NUCLEOTIDE SEQUENCE [LARGE SCALE GENOMIC DNA]</scope>
    <source>
        <strain>cv. Columbia</strain>
    </source>
</reference>
<reference key="3">
    <citation type="journal article" date="2017" name="Plant J.">
        <title>Araport11: a complete reannotation of the Arabidopsis thaliana reference genome.</title>
        <authorList>
            <person name="Cheng C.Y."/>
            <person name="Krishnakumar V."/>
            <person name="Chan A.P."/>
            <person name="Thibaud-Nissen F."/>
            <person name="Schobel S."/>
            <person name="Town C.D."/>
        </authorList>
    </citation>
    <scope>GENOME REANNOTATION</scope>
    <source>
        <strain>cv. Columbia</strain>
    </source>
</reference>
<reference key="4">
    <citation type="submission" date="2004-02" db="EMBL/GenBank/DDBJ databases">
        <title>Arabidopsis ORF clones.</title>
        <authorList>
            <person name="Shinn P."/>
            <person name="Chen H."/>
            <person name="Cheuk R.F."/>
            <person name="Kim C.J."/>
            <person name="Ecker J.R."/>
        </authorList>
    </citation>
    <scope>NUCLEOTIDE SEQUENCE [LARGE SCALE MRNA] (ISOFORM 2)</scope>
    <source>
        <strain>cv. Columbia</strain>
    </source>
</reference>
<reference key="5">
    <citation type="submission" date="2006-07" db="EMBL/GenBank/DDBJ databases">
        <title>Large-scale analysis of RIKEN Arabidopsis full-length (RAFL) cDNAs.</title>
        <authorList>
            <person name="Totoki Y."/>
            <person name="Seki M."/>
            <person name="Ishida J."/>
            <person name="Nakajima M."/>
            <person name="Enju A."/>
            <person name="Kamiya A."/>
            <person name="Narusaka M."/>
            <person name="Shin-i T."/>
            <person name="Nakagawa M."/>
            <person name="Sakamoto N."/>
            <person name="Oishi K."/>
            <person name="Kohara Y."/>
            <person name="Kobayashi M."/>
            <person name="Toyoda A."/>
            <person name="Sakaki Y."/>
            <person name="Sakurai T."/>
            <person name="Iida K."/>
            <person name="Akiyama K."/>
            <person name="Satou M."/>
            <person name="Toyoda T."/>
            <person name="Konagaya A."/>
            <person name="Carninci P."/>
            <person name="Kawai J."/>
            <person name="Hayashizaki Y."/>
            <person name="Shinozaki K."/>
        </authorList>
    </citation>
    <scope>NUCLEOTIDE SEQUENCE [LARGE SCALE MRNA] OF 71-1259 (ISOFORM 1)</scope>
    <source>
        <strain>cv. Columbia</strain>
    </source>
</reference>